<protein>
    <recommendedName>
        <fullName evidence="1">3-hydroxydecanoyl-[acyl-carrier-protein] dehydratase</fullName>
        <ecNumber evidence="1">4.2.1.59</ecNumber>
    </recommendedName>
    <alternativeName>
        <fullName evidence="1">3-hydroxyacyl-[acyl-carrier-protein] dehydratase FabA</fullName>
    </alternativeName>
    <alternativeName>
        <fullName evidence="1">Beta-hydroxydecanoyl thioester dehydrase</fullName>
    </alternativeName>
    <alternativeName>
        <fullName evidence="1">Trans-2-decenoyl-[acyl-carrier-protein] isomerase</fullName>
        <ecNumber evidence="1">5.3.3.14</ecNumber>
    </alternativeName>
</protein>
<accession>A3N3I3</accession>
<sequence>MNTCTPNIKSSYTYEDLLASGRGELFGKEGPQLPAPTMLMMDRINLMTENGGLFDKGYIEAELDIHPDLPFFSCHFIGDPVMPGCLGLDAMWQLVGFFLGWIGGKGKGRALGVGEVKFTGQILPNAKKVTYRIHMKRVINRKLVMGMADGEVEVDGRVIYTATDLKVGLFQDTSAF</sequence>
<organism>
    <name type="scientific">Actinobacillus pleuropneumoniae serotype 5b (strain L20)</name>
    <dbReference type="NCBI Taxonomy" id="416269"/>
    <lineage>
        <taxon>Bacteria</taxon>
        <taxon>Pseudomonadati</taxon>
        <taxon>Pseudomonadota</taxon>
        <taxon>Gammaproteobacteria</taxon>
        <taxon>Pasteurellales</taxon>
        <taxon>Pasteurellaceae</taxon>
        <taxon>Actinobacillus</taxon>
    </lineage>
</organism>
<keyword id="KW-0963">Cytoplasm</keyword>
<keyword id="KW-0275">Fatty acid biosynthesis</keyword>
<keyword id="KW-0276">Fatty acid metabolism</keyword>
<keyword id="KW-0413">Isomerase</keyword>
<keyword id="KW-0444">Lipid biosynthesis</keyword>
<keyword id="KW-0443">Lipid metabolism</keyword>
<keyword id="KW-0456">Lyase</keyword>
<keyword id="KW-1185">Reference proteome</keyword>
<feature type="chain" id="PRO_0000301869" description="3-hydroxydecanoyl-[acyl-carrier-protein] dehydratase">
    <location>
        <begin position="1"/>
        <end position="176"/>
    </location>
</feature>
<feature type="active site" evidence="1">
    <location>
        <position position="75"/>
    </location>
</feature>
<name>FABA_ACTP2</name>
<proteinExistence type="inferred from homology"/>
<dbReference type="EC" id="4.2.1.59" evidence="1"/>
<dbReference type="EC" id="5.3.3.14" evidence="1"/>
<dbReference type="EMBL" id="CP000569">
    <property type="protein sequence ID" value="ABN74969.1"/>
    <property type="molecule type" value="Genomic_DNA"/>
</dbReference>
<dbReference type="RefSeq" id="WP_005602774.1">
    <property type="nucleotide sequence ID" value="NC_009053.1"/>
</dbReference>
<dbReference type="SMR" id="A3N3I3"/>
<dbReference type="STRING" id="416269.APL_1889"/>
<dbReference type="EnsemblBacteria" id="ABN74969">
    <property type="protein sequence ID" value="ABN74969"/>
    <property type="gene ID" value="APL_1889"/>
</dbReference>
<dbReference type="KEGG" id="apl:APL_1889"/>
<dbReference type="eggNOG" id="COG0764">
    <property type="taxonomic scope" value="Bacteria"/>
</dbReference>
<dbReference type="HOGENOM" id="CLU_097925_0_0_6"/>
<dbReference type="UniPathway" id="UPA00094"/>
<dbReference type="Proteomes" id="UP000001432">
    <property type="component" value="Chromosome"/>
</dbReference>
<dbReference type="GO" id="GO:0005737">
    <property type="term" value="C:cytoplasm"/>
    <property type="evidence" value="ECO:0007669"/>
    <property type="project" value="UniProtKB-SubCell"/>
</dbReference>
<dbReference type="GO" id="GO:0019171">
    <property type="term" value="F:(3R)-hydroxyacyl-[acyl-carrier-protein] dehydratase activity"/>
    <property type="evidence" value="ECO:0007669"/>
    <property type="project" value="UniProtKB-UniRule"/>
</dbReference>
<dbReference type="GO" id="GO:0034017">
    <property type="term" value="F:trans-2-decenoyl-acyl-carrier-protein isomerase activity"/>
    <property type="evidence" value="ECO:0007669"/>
    <property type="project" value="UniProtKB-UniRule"/>
</dbReference>
<dbReference type="GO" id="GO:0006636">
    <property type="term" value="P:unsaturated fatty acid biosynthetic process"/>
    <property type="evidence" value="ECO:0007669"/>
    <property type="project" value="UniProtKB-UniRule"/>
</dbReference>
<dbReference type="CDD" id="cd01287">
    <property type="entry name" value="FabA"/>
    <property type="match status" value="1"/>
</dbReference>
<dbReference type="FunFam" id="3.10.129.10:FF:000003">
    <property type="entry name" value="3-hydroxydecanoyl-[acyl-carrier-protein] dehydratase"/>
    <property type="match status" value="1"/>
</dbReference>
<dbReference type="Gene3D" id="3.10.129.10">
    <property type="entry name" value="Hotdog Thioesterase"/>
    <property type="match status" value="1"/>
</dbReference>
<dbReference type="HAMAP" id="MF_00405">
    <property type="entry name" value="FabA"/>
    <property type="match status" value="1"/>
</dbReference>
<dbReference type="InterPro" id="IPR010083">
    <property type="entry name" value="FabA"/>
</dbReference>
<dbReference type="InterPro" id="IPR013114">
    <property type="entry name" value="FabA_FabZ"/>
</dbReference>
<dbReference type="InterPro" id="IPR029069">
    <property type="entry name" value="HotDog_dom_sf"/>
</dbReference>
<dbReference type="NCBIfam" id="TIGR01749">
    <property type="entry name" value="fabA"/>
    <property type="match status" value="1"/>
</dbReference>
<dbReference type="NCBIfam" id="NF003509">
    <property type="entry name" value="PRK05174.1"/>
    <property type="match status" value="1"/>
</dbReference>
<dbReference type="PANTHER" id="PTHR30272">
    <property type="entry name" value="3-HYDROXYACYL-[ACYL-CARRIER-PROTEIN] DEHYDRATASE"/>
    <property type="match status" value="1"/>
</dbReference>
<dbReference type="PANTHER" id="PTHR30272:SF8">
    <property type="entry name" value="3-HYDROXYDECANOYL-[ACYL-CARRIER-PROTEIN] DEHYDRATASE"/>
    <property type="match status" value="1"/>
</dbReference>
<dbReference type="Pfam" id="PF07977">
    <property type="entry name" value="FabA"/>
    <property type="match status" value="1"/>
</dbReference>
<dbReference type="SUPFAM" id="SSF54637">
    <property type="entry name" value="Thioesterase/thiol ester dehydrase-isomerase"/>
    <property type="match status" value="1"/>
</dbReference>
<reference key="1">
    <citation type="journal article" date="2008" name="J. Bacteriol.">
        <title>The complete genome sequence of Actinobacillus pleuropneumoniae L20 (serotype 5b).</title>
        <authorList>
            <person name="Foote S.J."/>
            <person name="Bosse J.T."/>
            <person name="Bouevitch A.B."/>
            <person name="Langford P.R."/>
            <person name="Young N.M."/>
            <person name="Nash J.H.E."/>
        </authorList>
    </citation>
    <scope>NUCLEOTIDE SEQUENCE [LARGE SCALE GENOMIC DNA]</scope>
    <source>
        <strain>L20</strain>
    </source>
</reference>
<evidence type="ECO:0000255" key="1">
    <source>
        <dbReference type="HAMAP-Rule" id="MF_00405"/>
    </source>
</evidence>
<gene>
    <name evidence="1" type="primary">fabA</name>
    <name type="ordered locus">APL_1889</name>
</gene>
<comment type="function">
    <text evidence="1">Necessary for the introduction of cis unsaturation into fatty acids. Catalyzes the dehydration of (3R)-3-hydroxydecanoyl-ACP to E-(2)-decenoyl-ACP and then its isomerization to Z-(3)-decenoyl-ACP. Can catalyze the dehydratase reaction for beta-hydroxyacyl-ACPs with saturated chain lengths up to 16:0, being most active on intermediate chain length.</text>
</comment>
<comment type="catalytic activity">
    <reaction evidence="1">
        <text>a (3R)-hydroxyacyl-[ACP] = a (2E)-enoyl-[ACP] + H2O</text>
        <dbReference type="Rhea" id="RHEA:13097"/>
        <dbReference type="Rhea" id="RHEA-COMP:9925"/>
        <dbReference type="Rhea" id="RHEA-COMP:9945"/>
        <dbReference type="ChEBI" id="CHEBI:15377"/>
        <dbReference type="ChEBI" id="CHEBI:78784"/>
        <dbReference type="ChEBI" id="CHEBI:78827"/>
        <dbReference type="EC" id="4.2.1.59"/>
    </reaction>
</comment>
<comment type="catalytic activity">
    <reaction evidence="1">
        <text>(3R)-hydroxydecanoyl-[ACP] = (2E)-decenoyl-[ACP] + H2O</text>
        <dbReference type="Rhea" id="RHEA:41860"/>
        <dbReference type="Rhea" id="RHEA-COMP:9638"/>
        <dbReference type="Rhea" id="RHEA-COMP:9639"/>
        <dbReference type="ChEBI" id="CHEBI:15377"/>
        <dbReference type="ChEBI" id="CHEBI:78466"/>
        <dbReference type="ChEBI" id="CHEBI:78467"/>
    </reaction>
</comment>
<comment type="catalytic activity">
    <reaction evidence="1">
        <text>(2E)-decenoyl-[ACP] = (3Z)-decenoyl-[ACP]</text>
        <dbReference type="Rhea" id="RHEA:23568"/>
        <dbReference type="Rhea" id="RHEA-COMP:9639"/>
        <dbReference type="Rhea" id="RHEA-COMP:9927"/>
        <dbReference type="ChEBI" id="CHEBI:78467"/>
        <dbReference type="ChEBI" id="CHEBI:78798"/>
        <dbReference type="EC" id="5.3.3.14"/>
    </reaction>
</comment>
<comment type="pathway">
    <text evidence="1">Lipid metabolism; fatty acid biosynthesis.</text>
</comment>
<comment type="subunit">
    <text evidence="1">Homodimer.</text>
</comment>
<comment type="subcellular location">
    <subcellularLocation>
        <location evidence="1">Cytoplasm</location>
    </subcellularLocation>
</comment>
<comment type="similarity">
    <text evidence="1">Belongs to the thioester dehydratase family. FabA subfamily.</text>
</comment>